<sequence>MKLSFTKMHGAGNDFVVLDGYSHTLPPLTDVQVRALADRHFGIGADQLLVVEKPTVDGADFKYRIFNCDGGEVEHCGNGARCFVKFVTDRGLTDKRSVRVQVMKGLITLTMQDNGEVVVDMGAPVFEPAQVPFDASGLDGRTDGNDTLWPLDVGGATRWVSTVSMGNPHAVQVVDDAEAYPVLAEGPLIERHARFPKRVNAGFMQIVSRHEVKLRVYERGAGETLACGTGACAAVAAGIRRGLLDTPVTVHTHGGTLTISWDGAHDERAALTMAGPATTVFEGEIELNV</sequence>
<evidence type="ECO:0000255" key="1">
    <source>
        <dbReference type="HAMAP-Rule" id="MF_00197"/>
    </source>
</evidence>
<name>DAPF_BURVG</name>
<organism>
    <name type="scientific">Burkholderia vietnamiensis (strain G4 / LMG 22486)</name>
    <name type="common">Burkholderia cepacia (strain R1808)</name>
    <dbReference type="NCBI Taxonomy" id="269482"/>
    <lineage>
        <taxon>Bacteria</taxon>
        <taxon>Pseudomonadati</taxon>
        <taxon>Pseudomonadota</taxon>
        <taxon>Betaproteobacteria</taxon>
        <taxon>Burkholderiales</taxon>
        <taxon>Burkholderiaceae</taxon>
        <taxon>Burkholderia</taxon>
        <taxon>Burkholderia cepacia complex</taxon>
    </lineage>
</organism>
<accession>A4JIQ6</accession>
<reference key="1">
    <citation type="submission" date="2007-03" db="EMBL/GenBank/DDBJ databases">
        <title>Complete sequence of chromosome 1 of Burkholderia vietnamiensis G4.</title>
        <authorList>
            <consortium name="US DOE Joint Genome Institute"/>
            <person name="Copeland A."/>
            <person name="Lucas S."/>
            <person name="Lapidus A."/>
            <person name="Barry K."/>
            <person name="Detter J.C."/>
            <person name="Glavina del Rio T."/>
            <person name="Hammon N."/>
            <person name="Israni S."/>
            <person name="Dalin E."/>
            <person name="Tice H."/>
            <person name="Pitluck S."/>
            <person name="Chain P."/>
            <person name="Malfatti S."/>
            <person name="Shin M."/>
            <person name="Vergez L."/>
            <person name="Schmutz J."/>
            <person name="Larimer F."/>
            <person name="Land M."/>
            <person name="Hauser L."/>
            <person name="Kyrpides N."/>
            <person name="Tiedje J."/>
            <person name="Richardson P."/>
        </authorList>
    </citation>
    <scope>NUCLEOTIDE SEQUENCE [LARGE SCALE GENOMIC DNA]</scope>
    <source>
        <strain>G4 / LMG 22486</strain>
    </source>
</reference>
<protein>
    <recommendedName>
        <fullName evidence="1">Diaminopimelate epimerase</fullName>
        <shortName evidence="1">DAP epimerase</shortName>
        <ecNumber evidence="1">5.1.1.7</ecNumber>
    </recommendedName>
    <alternativeName>
        <fullName evidence="1">PLP-independent amino acid racemase</fullName>
    </alternativeName>
</protein>
<proteinExistence type="inferred from homology"/>
<dbReference type="EC" id="5.1.1.7" evidence="1"/>
<dbReference type="EMBL" id="CP000614">
    <property type="protein sequence ID" value="ABO56159.1"/>
    <property type="molecule type" value="Genomic_DNA"/>
</dbReference>
<dbReference type="SMR" id="A4JIQ6"/>
<dbReference type="KEGG" id="bvi:Bcep1808_3168"/>
<dbReference type="eggNOG" id="COG0253">
    <property type="taxonomic scope" value="Bacteria"/>
</dbReference>
<dbReference type="HOGENOM" id="CLU_053306_1_1_4"/>
<dbReference type="UniPathway" id="UPA00034">
    <property type="reaction ID" value="UER00025"/>
</dbReference>
<dbReference type="Proteomes" id="UP000002287">
    <property type="component" value="Chromosome 1"/>
</dbReference>
<dbReference type="GO" id="GO:0005829">
    <property type="term" value="C:cytosol"/>
    <property type="evidence" value="ECO:0007669"/>
    <property type="project" value="TreeGrafter"/>
</dbReference>
<dbReference type="GO" id="GO:0008837">
    <property type="term" value="F:diaminopimelate epimerase activity"/>
    <property type="evidence" value="ECO:0007669"/>
    <property type="project" value="UniProtKB-UniRule"/>
</dbReference>
<dbReference type="GO" id="GO:0009089">
    <property type="term" value="P:lysine biosynthetic process via diaminopimelate"/>
    <property type="evidence" value="ECO:0007669"/>
    <property type="project" value="UniProtKB-UniRule"/>
</dbReference>
<dbReference type="FunFam" id="3.10.310.10:FF:000001">
    <property type="entry name" value="Diaminopimelate epimerase"/>
    <property type="match status" value="1"/>
</dbReference>
<dbReference type="Gene3D" id="3.10.310.10">
    <property type="entry name" value="Diaminopimelate Epimerase, Chain A, domain 1"/>
    <property type="match status" value="2"/>
</dbReference>
<dbReference type="HAMAP" id="MF_00197">
    <property type="entry name" value="DAP_epimerase"/>
    <property type="match status" value="1"/>
</dbReference>
<dbReference type="InterPro" id="IPR018510">
    <property type="entry name" value="DAP_epimerase_AS"/>
</dbReference>
<dbReference type="InterPro" id="IPR001653">
    <property type="entry name" value="DAP_epimerase_DapF"/>
</dbReference>
<dbReference type="NCBIfam" id="TIGR00652">
    <property type="entry name" value="DapF"/>
    <property type="match status" value="1"/>
</dbReference>
<dbReference type="PANTHER" id="PTHR31689:SF0">
    <property type="entry name" value="DIAMINOPIMELATE EPIMERASE"/>
    <property type="match status" value="1"/>
</dbReference>
<dbReference type="PANTHER" id="PTHR31689">
    <property type="entry name" value="DIAMINOPIMELATE EPIMERASE, CHLOROPLASTIC"/>
    <property type="match status" value="1"/>
</dbReference>
<dbReference type="Pfam" id="PF01678">
    <property type="entry name" value="DAP_epimerase"/>
    <property type="match status" value="2"/>
</dbReference>
<dbReference type="SUPFAM" id="SSF54506">
    <property type="entry name" value="Diaminopimelate epimerase-like"/>
    <property type="match status" value="1"/>
</dbReference>
<dbReference type="PROSITE" id="PS01326">
    <property type="entry name" value="DAP_EPIMERASE"/>
    <property type="match status" value="1"/>
</dbReference>
<keyword id="KW-0028">Amino-acid biosynthesis</keyword>
<keyword id="KW-0963">Cytoplasm</keyword>
<keyword id="KW-0413">Isomerase</keyword>
<keyword id="KW-0457">Lysine biosynthesis</keyword>
<comment type="function">
    <text evidence="1">Catalyzes the stereoinversion of LL-2,6-diaminopimelate (L,L-DAP) to meso-diaminopimelate (meso-DAP), a precursor of L-lysine and an essential component of the bacterial peptidoglycan.</text>
</comment>
<comment type="catalytic activity">
    <reaction evidence="1">
        <text>(2S,6S)-2,6-diaminopimelate = meso-2,6-diaminopimelate</text>
        <dbReference type="Rhea" id="RHEA:15393"/>
        <dbReference type="ChEBI" id="CHEBI:57609"/>
        <dbReference type="ChEBI" id="CHEBI:57791"/>
        <dbReference type="EC" id="5.1.1.7"/>
    </reaction>
</comment>
<comment type="pathway">
    <text evidence="1">Amino-acid biosynthesis; L-lysine biosynthesis via DAP pathway; DL-2,6-diaminopimelate from LL-2,6-diaminopimelate: step 1/1.</text>
</comment>
<comment type="subunit">
    <text evidence="1">Homodimer.</text>
</comment>
<comment type="subcellular location">
    <subcellularLocation>
        <location evidence="1">Cytoplasm</location>
    </subcellularLocation>
</comment>
<comment type="similarity">
    <text evidence="1">Belongs to the diaminopimelate epimerase family.</text>
</comment>
<gene>
    <name evidence="1" type="primary">dapF</name>
    <name type="ordered locus">Bcep1808_3168</name>
</gene>
<feature type="chain" id="PRO_1000011862" description="Diaminopimelate epimerase">
    <location>
        <begin position="1"/>
        <end position="289"/>
    </location>
</feature>
<feature type="active site" description="Proton donor" evidence="1">
    <location>
        <position position="76"/>
    </location>
</feature>
<feature type="active site" description="Proton acceptor" evidence="1">
    <location>
        <position position="227"/>
    </location>
</feature>
<feature type="binding site" evidence="1">
    <location>
        <position position="13"/>
    </location>
    <ligand>
        <name>substrate</name>
    </ligand>
</feature>
<feature type="binding site" evidence="1">
    <location>
        <position position="47"/>
    </location>
    <ligand>
        <name>substrate</name>
    </ligand>
</feature>
<feature type="binding site" evidence="1">
    <location>
        <position position="67"/>
    </location>
    <ligand>
        <name>substrate</name>
    </ligand>
</feature>
<feature type="binding site" evidence="1">
    <location>
        <begin position="77"/>
        <end position="78"/>
    </location>
    <ligand>
        <name>substrate</name>
    </ligand>
</feature>
<feature type="binding site" evidence="1">
    <location>
        <position position="167"/>
    </location>
    <ligand>
        <name>substrate</name>
    </ligand>
</feature>
<feature type="binding site" evidence="1">
    <location>
        <position position="200"/>
    </location>
    <ligand>
        <name>substrate</name>
    </ligand>
</feature>
<feature type="binding site" evidence="1">
    <location>
        <begin position="218"/>
        <end position="219"/>
    </location>
    <ligand>
        <name>substrate</name>
    </ligand>
</feature>
<feature type="binding site" evidence="1">
    <location>
        <begin position="228"/>
        <end position="229"/>
    </location>
    <ligand>
        <name>substrate</name>
    </ligand>
</feature>
<feature type="site" description="Could be important to modulate the pK values of the two catalytic cysteine residues" evidence="1">
    <location>
        <position position="169"/>
    </location>
</feature>
<feature type="site" description="Could be important to modulate the pK values of the two catalytic cysteine residues" evidence="1">
    <location>
        <position position="218"/>
    </location>
</feature>